<proteinExistence type="inferred from homology"/>
<dbReference type="EMBL" id="AB046320">
    <property type="protein sequence ID" value="BAB67832.1"/>
    <property type="molecule type" value="Genomic_DNA"/>
</dbReference>
<dbReference type="EMBL" id="AB046321">
    <property type="protein sequence ID" value="BAB67833.1"/>
    <property type="molecule type" value="Genomic_DNA"/>
</dbReference>
<dbReference type="SMR" id="Q94YL9"/>
<dbReference type="GO" id="GO:0005743">
    <property type="term" value="C:mitochondrial inner membrane"/>
    <property type="evidence" value="ECO:0007669"/>
    <property type="project" value="UniProtKB-SubCell"/>
</dbReference>
<dbReference type="GO" id="GO:0045275">
    <property type="term" value="C:respiratory chain complex III"/>
    <property type="evidence" value="ECO:0007669"/>
    <property type="project" value="InterPro"/>
</dbReference>
<dbReference type="GO" id="GO:0046872">
    <property type="term" value="F:metal ion binding"/>
    <property type="evidence" value="ECO:0007669"/>
    <property type="project" value="UniProtKB-KW"/>
</dbReference>
<dbReference type="GO" id="GO:0008121">
    <property type="term" value="F:ubiquinol-cytochrome-c reductase activity"/>
    <property type="evidence" value="ECO:0007669"/>
    <property type="project" value="InterPro"/>
</dbReference>
<dbReference type="GO" id="GO:0006122">
    <property type="term" value="P:mitochondrial electron transport, ubiquinol to cytochrome c"/>
    <property type="evidence" value="ECO:0007669"/>
    <property type="project" value="TreeGrafter"/>
</dbReference>
<dbReference type="CDD" id="cd00290">
    <property type="entry name" value="cytochrome_b_C"/>
    <property type="match status" value="1"/>
</dbReference>
<dbReference type="CDD" id="cd00284">
    <property type="entry name" value="Cytochrome_b_N"/>
    <property type="match status" value="1"/>
</dbReference>
<dbReference type="FunFam" id="1.20.810.10:FF:000002">
    <property type="entry name" value="Cytochrome b"/>
    <property type="match status" value="1"/>
</dbReference>
<dbReference type="Gene3D" id="1.20.810.10">
    <property type="entry name" value="Cytochrome Bc1 Complex, Chain C"/>
    <property type="match status" value="1"/>
</dbReference>
<dbReference type="InterPro" id="IPR005798">
    <property type="entry name" value="Cyt_b/b6_C"/>
</dbReference>
<dbReference type="InterPro" id="IPR036150">
    <property type="entry name" value="Cyt_b/b6_C_sf"/>
</dbReference>
<dbReference type="InterPro" id="IPR005797">
    <property type="entry name" value="Cyt_b/b6_N"/>
</dbReference>
<dbReference type="InterPro" id="IPR027387">
    <property type="entry name" value="Cytb/b6-like_sf"/>
</dbReference>
<dbReference type="InterPro" id="IPR030689">
    <property type="entry name" value="Cytochrome_b"/>
</dbReference>
<dbReference type="InterPro" id="IPR048260">
    <property type="entry name" value="Cytochrome_b_C_euk/bac"/>
</dbReference>
<dbReference type="InterPro" id="IPR048259">
    <property type="entry name" value="Cytochrome_b_N_euk/bac"/>
</dbReference>
<dbReference type="InterPro" id="IPR016174">
    <property type="entry name" value="Di-haem_cyt_TM"/>
</dbReference>
<dbReference type="PANTHER" id="PTHR19271">
    <property type="entry name" value="CYTOCHROME B"/>
    <property type="match status" value="1"/>
</dbReference>
<dbReference type="PANTHER" id="PTHR19271:SF16">
    <property type="entry name" value="CYTOCHROME B"/>
    <property type="match status" value="1"/>
</dbReference>
<dbReference type="Pfam" id="PF00032">
    <property type="entry name" value="Cytochrom_B_C"/>
    <property type="match status" value="1"/>
</dbReference>
<dbReference type="Pfam" id="PF00033">
    <property type="entry name" value="Cytochrome_B"/>
    <property type="match status" value="1"/>
</dbReference>
<dbReference type="PIRSF" id="PIRSF038885">
    <property type="entry name" value="COB"/>
    <property type="match status" value="1"/>
</dbReference>
<dbReference type="SUPFAM" id="SSF81648">
    <property type="entry name" value="a domain/subunit of cytochrome bc1 complex (Ubiquinol-cytochrome c reductase)"/>
    <property type="match status" value="1"/>
</dbReference>
<dbReference type="SUPFAM" id="SSF81342">
    <property type="entry name" value="Transmembrane di-heme cytochromes"/>
    <property type="match status" value="1"/>
</dbReference>
<dbReference type="PROSITE" id="PS51003">
    <property type="entry name" value="CYTB_CTER"/>
    <property type="match status" value="1"/>
</dbReference>
<dbReference type="PROSITE" id="PS51002">
    <property type="entry name" value="CYTB_NTER"/>
    <property type="match status" value="1"/>
</dbReference>
<accession>Q94YL9</accession>
<accession>Q94YL8</accession>
<evidence type="ECO:0000250" key="1"/>
<evidence type="ECO:0000250" key="2">
    <source>
        <dbReference type="UniProtKB" id="P00157"/>
    </source>
</evidence>
<evidence type="ECO:0000255" key="3">
    <source>
        <dbReference type="PROSITE-ProRule" id="PRU00967"/>
    </source>
</evidence>
<evidence type="ECO:0000255" key="4">
    <source>
        <dbReference type="PROSITE-ProRule" id="PRU00968"/>
    </source>
</evidence>
<name>CYB_CYNBR</name>
<feature type="chain" id="PRO_0000060847" description="Cytochrome b">
    <location>
        <begin position="1"/>
        <end position="379"/>
    </location>
</feature>
<feature type="transmembrane region" description="Helical" evidence="2">
    <location>
        <begin position="33"/>
        <end position="53"/>
    </location>
</feature>
<feature type="transmembrane region" description="Helical" evidence="2">
    <location>
        <begin position="77"/>
        <end position="98"/>
    </location>
</feature>
<feature type="transmembrane region" description="Helical" evidence="2">
    <location>
        <begin position="113"/>
        <end position="133"/>
    </location>
</feature>
<feature type="transmembrane region" description="Helical" evidence="2">
    <location>
        <begin position="178"/>
        <end position="198"/>
    </location>
</feature>
<feature type="transmembrane region" description="Helical" evidence="2">
    <location>
        <begin position="226"/>
        <end position="246"/>
    </location>
</feature>
<feature type="transmembrane region" description="Helical" evidence="2">
    <location>
        <begin position="288"/>
        <end position="308"/>
    </location>
</feature>
<feature type="transmembrane region" description="Helical" evidence="2">
    <location>
        <begin position="320"/>
        <end position="340"/>
    </location>
</feature>
<feature type="transmembrane region" description="Helical" evidence="2">
    <location>
        <begin position="347"/>
        <end position="367"/>
    </location>
</feature>
<feature type="binding site" description="axial binding residue" evidence="2">
    <location>
        <position position="83"/>
    </location>
    <ligand>
        <name>heme b</name>
        <dbReference type="ChEBI" id="CHEBI:60344"/>
        <label>b562</label>
    </ligand>
    <ligandPart>
        <name>Fe</name>
        <dbReference type="ChEBI" id="CHEBI:18248"/>
    </ligandPart>
</feature>
<feature type="binding site" description="axial binding residue" evidence="2">
    <location>
        <position position="97"/>
    </location>
    <ligand>
        <name>heme b</name>
        <dbReference type="ChEBI" id="CHEBI:60344"/>
        <label>b566</label>
    </ligand>
    <ligandPart>
        <name>Fe</name>
        <dbReference type="ChEBI" id="CHEBI:18248"/>
    </ligandPart>
</feature>
<feature type="binding site" description="axial binding residue" evidence="2">
    <location>
        <position position="182"/>
    </location>
    <ligand>
        <name>heme b</name>
        <dbReference type="ChEBI" id="CHEBI:60344"/>
        <label>b562</label>
    </ligand>
    <ligandPart>
        <name>Fe</name>
        <dbReference type="ChEBI" id="CHEBI:18248"/>
    </ligandPart>
</feature>
<feature type="binding site" description="axial binding residue" evidence="2">
    <location>
        <position position="196"/>
    </location>
    <ligand>
        <name>heme b</name>
        <dbReference type="ChEBI" id="CHEBI:60344"/>
        <label>b566</label>
    </ligand>
    <ligandPart>
        <name>Fe</name>
        <dbReference type="ChEBI" id="CHEBI:18248"/>
    </ligandPart>
</feature>
<feature type="binding site" evidence="2">
    <location>
        <position position="201"/>
    </location>
    <ligand>
        <name>a ubiquinone</name>
        <dbReference type="ChEBI" id="CHEBI:16389"/>
    </ligand>
</feature>
<feature type="sequence variant">
    <original>V</original>
    <variation>I</variation>
    <location>
        <position position="364"/>
    </location>
</feature>
<organism>
    <name type="scientific">Cynopterus brachyotis</name>
    <name type="common">Lesser short-nosed fruit bat</name>
    <name type="synonym">Pachysoma brachyotis</name>
    <dbReference type="NCBI Taxonomy" id="58060"/>
    <lineage>
        <taxon>Eukaryota</taxon>
        <taxon>Metazoa</taxon>
        <taxon>Chordata</taxon>
        <taxon>Craniata</taxon>
        <taxon>Vertebrata</taxon>
        <taxon>Euteleostomi</taxon>
        <taxon>Mammalia</taxon>
        <taxon>Eutheria</taxon>
        <taxon>Laurasiatheria</taxon>
        <taxon>Chiroptera</taxon>
        <taxon>Yinpterochiroptera</taxon>
        <taxon>Pteropodoidea</taxon>
        <taxon>Pteropodidae</taxon>
        <taxon>Cynopterinae</taxon>
        <taxon>Cynopterus</taxon>
    </lineage>
</organism>
<protein>
    <recommendedName>
        <fullName>Cytochrome b</fullName>
    </recommendedName>
    <alternativeName>
        <fullName>Complex III subunit 3</fullName>
    </alternativeName>
    <alternativeName>
        <fullName>Complex III subunit III</fullName>
    </alternativeName>
    <alternativeName>
        <fullName>Cytochrome b-c1 complex subunit 3</fullName>
    </alternativeName>
    <alternativeName>
        <fullName>Ubiquinol-cytochrome-c reductase complex cytochrome b subunit</fullName>
    </alternativeName>
</protein>
<geneLocation type="mitochondrion"/>
<sequence>MTNIRKSHPLFKLINDALIDLPAPSNISSWWNFGSLLGICLLIQILTGLFLAMHYTSDTTTAFQSVTHICRDVNYGWVLRYLHANGASMFFICLFLHVGRGLYYGSYIYTETWNVGILLLFAVMATAFMGYVLPWGQMSFWGATVITNLLSAIPYIGTNLVEWIWGGFSVDKATLTRFFAFHFLLPFIISALVVVHLLFLHETGSNNPTGIPSDMDMIPFHPYYTIKDMLGALIMILALLLLVLFSPDLLGDPDNYIPANPLNTPPHIKPEWYFLFAYAILRSIPNKLGGVLALVLSILILALMPLLHTSKQRSMMFRPLSQCMFWLLVADLLTLTWIGGQPVEHPFIIIGQLASILYFSLILVLMPLVSIVENRLLKW</sequence>
<reference key="1">
    <citation type="journal article" date="2001" name="Can. J. Zool.">
        <title>Phylogenetic relationships among megachiropteran species from the two major islands of the Philippines, deduced from DNA sequences of the cytochrome b gene.</title>
        <authorList>
            <person name="Bastian S.T. Jr."/>
            <person name="Tanaka K."/>
            <person name="Anunciado R.V.P."/>
            <person name="Natural N.G."/>
            <person name="Sumalde A.C."/>
            <person name="Namikawa T."/>
        </authorList>
    </citation>
    <scope>NUCLEOTIDE SEQUENCE [GENOMIC DNA]</scope>
</reference>
<keyword id="KW-0249">Electron transport</keyword>
<keyword id="KW-0349">Heme</keyword>
<keyword id="KW-0408">Iron</keyword>
<keyword id="KW-0472">Membrane</keyword>
<keyword id="KW-0479">Metal-binding</keyword>
<keyword id="KW-0496">Mitochondrion</keyword>
<keyword id="KW-0999">Mitochondrion inner membrane</keyword>
<keyword id="KW-0679">Respiratory chain</keyword>
<keyword id="KW-0812">Transmembrane</keyword>
<keyword id="KW-1133">Transmembrane helix</keyword>
<keyword id="KW-0813">Transport</keyword>
<keyword id="KW-0830">Ubiquinone</keyword>
<gene>
    <name type="primary">MT-CYB</name>
    <name type="synonym">COB</name>
    <name type="synonym">CYTB</name>
    <name type="synonym">MTCYB</name>
</gene>
<comment type="function">
    <text evidence="2">Component of the ubiquinol-cytochrome c reductase complex (complex III or cytochrome b-c1 complex) that is part of the mitochondrial respiratory chain. The b-c1 complex mediates electron transfer from ubiquinol to cytochrome c. Contributes to the generation of a proton gradient across the mitochondrial membrane that is then used for ATP synthesis.</text>
</comment>
<comment type="cofactor">
    <cofactor evidence="2">
        <name>heme b</name>
        <dbReference type="ChEBI" id="CHEBI:60344"/>
    </cofactor>
    <text evidence="2">Binds 2 heme b groups non-covalently.</text>
</comment>
<comment type="subunit">
    <text evidence="2">The cytochrome bc1 complex contains 11 subunits: 3 respiratory subunits (MT-CYB, CYC1 and UQCRFS1), 2 core proteins (UQCRC1 and UQCRC2) and 6 low-molecular weight proteins (UQCRH/QCR6, UQCRB/QCR7, UQCRQ/QCR8, UQCR10/QCR9, UQCR11/QCR10 and a cleavage product of UQCRFS1). This cytochrome bc1 complex then forms a dimer.</text>
</comment>
<comment type="subcellular location">
    <subcellularLocation>
        <location evidence="2">Mitochondrion inner membrane</location>
        <topology evidence="2">Multi-pass membrane protein</topology>
    </subcellularLocation>
</comment>
<comment type="miscellaneous">
    <text evidence="1">Heme 1 (or BL or b562) is low-potential and absorbs at about 562 nm, and heme 2 (or BH or b566) is high-potential and absorbs at about 566 nm.</text>
</comment>
<comment type="similarity">
    <text evidence="3 4">Belongs to the cytochrome b family.</text>
</comment>
<comment type="caution">
    <text evidence="2">The full-length protein contains only eight transmembrane helices, not nine as predicted by bioinformatics tools.</text>
</comment>